<organism>
    <name type="scientific">Renibacterium salmoninarum (strain ATCC 33209 / DSM 20767 / JCM 11484 / NBRC 15589 / NCIMB 2235)</name>
    <dbReference type="NCBI Taxonomy" id="288705"/>
    <lineage>
        <taxon>Bacteria</taxon>
        <taxon>Bacillati</taxon>
        <taxon>Actinomycetota</taxon>
        <taxon>Actinomycetes</taxon>
        <taxon>Micrococcales</taxon>
        <taxon>Micrococcaceae</taxon>
        <taxon>Renibacterium</taxon>
    </lineage>
</organism>
<comment type="function">
    <text evidence="1">Peptide chain release factor 2 directs the termination of translation in response to the peptide chain termination codons UGA and UAA.</text>
</comment>
<comment type="subcellular location">
    <subcellularLocation>
        <location evidence="1">Cytoplasm</location>
    </subcellularLocation>
</comment>
<comment type="PTM">
    <text evidence="1">Methylated by PrmC. Methylation increases the termination efficiency of RF2.</text>
</comment>
<comment type="similarity">
    <text evidence="1">Belongs to the prokaryotic/mitochondrial release factor family.</text>
</comment>
<keyword id="KW-0963">Cytoplasm</keyword>
<keyword id="KW-0488">Methylation</keyword>
<keyword id="KW-0648">Protein biosynthesis</keyword>
<keyword id="KW-1185">Reference proteome</keyword>
<feature type="chain" id="PRO_1000093553" description="Peptide chain release factor 2">
    <location>
        <begin position="1"/>
        <end position="374"/>
    </location>
</feature>
<feature type="modified residue" description="N5-methylglutamine" evidence="1">
    <location>
        <position position="254"/>
    </location>
</feature>
<proteinExistence type="inferred from homology"/>
<gene>
    <name evidence="1" type="primary">prfB</name>
    <name type="ordered locus">RSal33209_1356</name>
</gene>
<reference key="1">
    <citation type="journal article" date="2008" name="J. Bacteriol.">
        <title>Genome sequence of the fish pathogen Renibacterium salmoninarum suggests reductive evolution away from an environmental Arthrobacter ancestor.</title>
        <authorList>
            <person name="Wiens G.D."/>
            <person name="Rockey D.D."/>
            <person name="Wu Z."/>
            <person name="Chang J."/>
            <person name="Levy R."/>
            <person name="Crane S."/>
            <person name="Chen D.S."/>
            <person name="Capri G.R."/>
            <person name="Burnett J.R."/>
            <person name="Sudheesh P.S."/>
            <person name="Schipma M.J."/>
            <person name="Burd H."/>
            <person name="Bhattacharyya A."/>
            <person name="Rhodes L.D."/>
            <person name="Kaul R."/>
            <person name="Strom M.S."/>
        </authorList>
    </citation>
    <scope>NUCLEOTIDE SEQUENCE [LARGE SCALE GENOMIC DNA]</scope>
    <source>
        <strain>ATCC 33209 / DSM 20767 / JCM 11484 / NBRC 15589 / NCIMB 2235</strain>
    </source>
</reference>
<dbReference type="EMBL" id="CP000910">
    <property type="protein sequence ID" value="ABY23093.1"/>
    <property type="molecule type" value="Genomic_DNA"/>
</dbReference>
<dbReference type="RefSeq" id="WP_012244774.1">
    <property type="nucleotide sequence ID" value="NC_010168.1"/>
</dbReference>
<dbReference type="SMR" id="A9WPT6"/>
<dbReference type="STRING" id="288705.RSal33209_1356"/>
<dbReference type="KEGG" id="rsa:RSal33209_1356"/>
<dbReference type="eggNOG" id="COG1186">
    <property type="taxonomic scope" value="Bacteria"/>
</dbReference>
<dbReference type="HOGENOM" id="CLU_036856_6_0_11"/>
<dbReference type="Proteomes" id="UP000002007">
    <property type="component" value="Chromosome"/>
</dbReference>
<dbReference type="GO" id="GO:0005737">
    <property type="term" value="C:cytoplasm"/>
    <property type="evidence" value="ECO:0007669"/>
    <property type="project" value="UniProtKB-SubCell"/>
</dbReference>
<dbReference type="GO" id="GO:0016149">
    <property type="term" value="F:translation release factor activity, codon specific"/>
    <property type="evidence" value="ECO:0007669"/>
    <property type="project" value="UniProtKB-UniRule"/>
</dbReference>
<dbReference type="FunFam" id="3.30.160.20:FF:000004">
    <property type="entry name" value="Peptide chain release factor 1"/>
    <property type="match status" value="1"/>
</dbReference>
<dbReference type="Gene3D" id="3.30.160.20">
    <property type="match status" value="1"/>
</dbReference>
<dbReference type="Gene3D" id="3.30.70.1660">
    <property type="match status" value="1"/>
</dbReference>
<dbReference type="Gene3D" id="1.20.58.410">
    <property type="entry name" value="Release factor"/>
    <property type="match status" value="1"/>
</dbReference>
<dbReference type="HAMAP" id="MF_00094">
    <property type="entry name" value="Rel_fac_2"/>
    <property type="match status" value="1"/>
</dbReference>
<dbReference type="InterPro" id="IPR005139">
    <property type="entry name" value="PCRF"/>
</dbReference>
<dbReference type="InterPro" id="IPR000352">
    <property type="entry name" value="Pep_chain_release_fac_I"/>
</dbReference>
<dbReference type="InterPro" id="IPR045853">
    <property type="entry name" value="Pep_chain_release_fac_I_sf"/>
</dbReference>
<dbReference type="InterPro" id="IPR004374">
    <property type="entry name" value="PrfB"/>
</dbReference>
<dbReference type="NCBIfam" id="TIGR00020">
    <property type="entry name" value="prfB"/>
    <property type="match status" value="1"/>
</dbReference>
<dbReference type="PANTHER" id="PTHR43116:SF3">
    <property type="entry name" value="CLASS I PEPTIDE CHAIN RELEASE FACTOR"/>
    <property type="match status" value="1"/>
</dbReference>
<dbReference type="PANTHER" id="PTHR43116">
    <property type="entry name" value="PEPTIDE CHAIN RELEASE FACTOR 2"/>
    <property type="match status" value="1"/>
</dbReference>
<dbReference type="Pfam" id="PF03462">
    <property type="entry name" value="PCRF"/>
    <property type="match status" value="1"/>
</dbReference>
<dbReference type="Pfam" id="PF00472">
    <property type="entry name" value="RF-1"/>
    <property type="match status" value="1"/>
</dbReference>
<dbReference type="SMART" id="SM00937">
    <property type="entry name" value="PCRF"/>
    <property type="match status" value="1"/>
</dbReference>
<dbReference type="SUPFAM" id="SSF75620">
    <property type="entry name" value="Release factor"/>
    <property type="match status" value="1"/>
</dbReference>
<dbReference type="PROSITE" id="PS00745">
    <property type="entry name" value="RF_PROK_I"/>
    <property type="match status" value="1"/>
</dbReference>
<name>RF2_RENSM</name>
<protein>
    <recommendedName>
        <fullName evidence="1">Peptide chain release factor 2</fullName>
        <shortName evidence="1">RF-2</shortName>
    </recommendedName>
</protein>
<sequence>MADIDFPAELRALRALRATYDSIERVIDADSLRKDIAVLSEQAGVPDLWDNPAEAQKVTSKLSHAQSKLERLETLTARIDDLEVLVELAESEHDEDSLAEASKELVSLQKSLQELEVVTLLAGEYDEREAVVTIRSGAGGVDAADFAEMLLRMYLRWAERHGYPTSVLDTSYAEEAGLKSATFEVKAPYAFGTLSVEAGTHRLVRISPFDNQGRRQTSFAAVEVIPLIEQTDSIEIPDNDIRVDVFRSSGPGGQSVNTTDSAVRLTHLPTGTVVSMQNEKSQLQNRAAATRVLQSRLLLLKKQQEDAEKKALAGDVKASWGDQMRSYVLNPYQMVKDLRTEHEVGNTSGVLDGDIDDFIDAGIRWRANNRNAAE</sequence>
<accession>A9WPT6</accession>
<evidence type="ECO:0000255" key="1">
    <source>
        <dbReference type="HAMAP-Rule" id="MF_00094"/>
    </source>
</evidence>